<dbReference type="EC" id="2.1.1.290"/>
<dbReference type="EC" id="2.3.1.231"/>
<dbReference type="EMBL" id="AAHF01000003">
    <property type="protein sequence ID" value="EAL91445.1"/>
    <property type="status" value="ALT_SEQ"/>
    <property type="molecule type" value="Genomic_DNA"/>
</dbReference>
<dbReference type="RefSeq" id="XP_753483.1">
    <property type="nucleotide sequence ID" value="XM_748390.1"/>
</dbReference>
<dbReference type="SMR" id="Q4WVD1"/>
<dbReference type="FunCoup" id="Q4WVD1">
    <property type="interactions" value="100"/>
</dbReference>
<dbReference type="STRING" id="330879.Q4WVD1"/>
<dbReference type="GeneID" id="3511201"/>
<dbReference type="KEGG" id="afm:AFUA_5G11670"/>
<dbReference type="eggNOG" id="KOG2132">
    <property type="taxonomic scope" value="Eukaryota"/>
</dbReference>
<dbReference type="eggNOG" id="KOG2918">
    <property type="taxonomic scope" value="Eukaryota"/>
</dbReference>
<dbReference type="HOGENOM" id="CLU_002761_1_0_1"/>
<dbReference type="InParanoid" id="Q4WVD1"/>
<dbReference type="OrthoDB" id="47172at2759"/>
<dbReference type="UniPathway" id="UPA00375"/>
<dbReference type="Proteomes" id="UP000002530">
    <property type="component" value="Chromosome 5"/>
</dbReference>
<dbReference type="GO" id="GO:0008175">
    <property type="term" value="F:tRNA methyltransferase activity"/>
    <property type="evidence" value="ECO:0000318"/>
    <property type="project" value="GO_Central"/>
</dbReference>
<dbReference type="GO" id="GO:0030488">
    <property type="term" value="P:tRNA methylation"/>
    <property type="evidence" value="ECO:0000318"/>
    <property type="project" value="GO_Central"/>
</dbReference>
<dbReference type="GO" id="GO:0031591">
    <property type="term" value="P:wybutosine biosynthetic process"/>
    <property type="evidence" value="ECO:0000318"/>
    <property type="project" value="GO_Central"/>
</dbReference>
<dbReference type="FunFam" id="2.120.10.80:FF:000133">
    <property type="entry name" value="Leucine carboxyl methyltransferase 2"/>
    <property type="match status" value="1"/>
</dbReference>
<dbReference type="FunFam" id="3.40.50.150:FF:000383">
    <property type="entry name" value="Leucine carboxyl methyltransferase 2"/>
    <property type="match status" value="1"/>
</dbReference>
<dbReference type="FunFam" id="2.60.120.650:FF:000043">
    <property type="entry name" value="tRNA wybutosine-synthesizing protein 4"/>
    <property type="match status" value="1"/>
</dbReference>
<dbReference type="Gene3D" id="6.10.140.1470">
    <property type="match status" value="1"/>
</dbReference>
<dbReference type="Gene3D" id="2.60.120.650">
    <property type="entry name" value="Cupin"/>
    <property type="match status" value="1"/>
</dbReference>
<dbReference type="Gene3D" id="2.120.10.80">
    <property type="entry name" value="Kelch-type beta propeller"/>
    <property type="match status" value="1"/>
</dbReference>
<dbReference type="Gene3D" id="3.40.50.150">
    <property type="entry name" value="Vaccinia Virus protein VP39"/>
    <property type="match status" value="1"/>
</dbReference>
<dbReference type="InterPro" id="IPR041667">
    <property type="entry name" value="Cupin_8"/>
</dbReference>
<dbReference type="InterPro" id="IPR011043">
    <property type="entry name" value="Gal_Oxase/kelch_b-propeller"/>
</dbReference>
<dbReference type="InterPro" id="IPR003347">
    <property type="entry name" value="JmjC_dom"/>
</dbReference>
<dbReference type="InterPro" id="IPR015915">
    <property type="entry name" value="Kelch-typ_b-propeller"/>
</dbReference>
<dbReference type="InterPro" id="IPR007213">
    <property type="entry name" value="Ppm1/Ppm2/Tcmp"/>
</dbReference>
<dbReference type="InterPro" id="IPR029063">
    <property type="entry name" value="SAM-dependent_MTases_sf"/>
</dbReference>
<dbReference type="PANTHER" id="PTHR46529">
    <property type="entry name" value="TRNA WYBUTOSINE-SYNTHESIZING PROTEIN 4"/>
    <property type="match status" value="1"/>
</dbReference>
<dbReference type="PANTHER" id="PTHR46529:SF1">
    <property type="entry name" value="TRNA WYBUTOSINE-SYNTHESIZING PROTEIN 4"/>
    <property type="match status" value="1"/>
</dbReference>
<dbReference type="Pfam" id="PF13621">
    <property type="entry name" value="Cupin_8"/>
    <property type="match status" value="1"/>
</dbReference>
<dbReference type="Pfam" id="PF13418">
    <property type="entry name" value="Kelch_4"/>
    <property type="match status" value="1"/>
</dbReference>
<dbReference type="Pfam" id="PF04072">
    <property type="entry name" value="LCM"/>
    <property type="match status" value="1"/>
</dbReference>
<dbReference type="SUPFAM" id="SSF51197">
    <property type="entry name" value="Clavaminate synthase-like"/>
    <property type="match status" value="1"/>
</dbReference>
<dbReference type="SUPFAM" id="SSF50965">
    <property type="entry name" value="Galactose oxidase, central domain"/>
    <property type="match status" value="1"/>
</dbReference>
<dbReference type="SUPFAM" id="SSF53335">
    <property type="entry name" value="S-adenosyl-L-methionine-dependent methyltransferases"/>
    <property type="match status" value="1"/>
</dbReference>
<dbReference type="PROSITE" id="PS51184">
    <property type="entry name" value="JMJC"/>
    <property type="match status" value="1"/>
</dbReference>
<keyword id="KW-0489">Methyltransferase</keyword>
<keyword id="KW-1185">Reference proteome</keyword>
<keyword id="KW-0949">S-adenosyl-L-methionine</keyword>
<keyword id="KW-0808">Transferase</keyword>
<keyword id="KW-0819">tRNA processing</keyword>
<organism>
    <name type="scientific">Aspergillus fumigatus (strain ATCC MYA-4609 / CBS 101355 / FGSC A1100 / Af293)</name>
    <name type="common">Neosartorya fumigata</name>
    <dbReference type="NCBI Taxonomy" id="330879"/>
    <lineage>
        <taxon>Eukaryota</taxon>
        <taxon>Fungi</taxon>
        <taxon>Dikarya</taxon>
        <taxon>Ascomycota</taxon>
        <taxon>Pezizomycotina</taxon>
        <taxon>Eurotiomycetes</taxon>
        <taxon>Eurotiomycetidae</taxon>
        <taxon>Eurotiales</taxon>
        <taxon>Aspergillaceae</taxon>
        <taxon>Aspergillus</taxon>
        <taxon>Aspergillus subgen. Fumigati</taxon>
    </lineage>
</organism>
<evidence type="ECO:0000250" key="1"/>
<evidence type="ECO:0000255" key="2">
    <source>
        <dbReference type="PROSITE-ProRule" id="PRU00538"/>
    </source>
</evidence>
<evidence type="ECO:0000305" key="3"/>
<protein>
    <recommendedName>
        <fullName>tRNA wybutosine-synthesizing protein 4</fullName>
        <shortName>tRNA-yW synthesizing protein 4</shortName>
        <ecNumber>2.1.1.290</ecNumber>
        <ecNumber>2.3.1.231</ecNumber>
    </recommendedName>
    <alternativeName>
        <fullName>Leucine carboxyl methyltransferase 2</fullName>
    </alternativeName>
    <alternativeName>
        <fullName>tRNA(Phe) (7-(3-amino-3-(methoxycarbonyl)propyl)wyosine(37)-N)-methoxycarbonyltransferase</fullName>
    </alternativeName>
    <alternativeName>
        <fullName>tRNA(Phe) (7-(3-amino-3-carboxypropyl)wyosine(37)-O)-methyltransferase</fullName>
    </alternativeName>
</protein>
<feature type="chain" id="PRO_0000226137" description="tRNA wybutosine-synthesizing protein 4">
    <location>
        <begin position="1"/>
        <end position="1047"/>
    </location>
</feature>
<feature type="domain" description="JmjC" evidence="2">
    <location>
        <begin position="814"/>
        <end position="1003"/>
    </location>
</feature>
<feature type="binding site" evidence="1">
    <location>
        <position position="69"/>
    </location>
    <ligand>
        <name>S-adenosyl-L-methionine</name>
        <dbReference type="ChEBI" id="CHEBI:59789"/>
    </ligand>
</feature>
<feature type="binding site" evidence="1">
    <location>
        <position position="95"/>
    </location>
    <ligand>
        <name>S-adenosyl-L-methionine</name>
        <dbReference type="ChEBI" id="CHEBI:59789"/>
    </ligand>
</feature>
<feature type="binding site" evidence="1">
    <location>
        <position position="122"/>
    </location>
    <ligand>
        <name>S-adenosyl-L-methionine</name>
        <dbReference type="ChEBI" id="CHEBI:59789"/>
    </ligand>
</feature>
<feature type="binding site" evidence="1">
    <location>
        <begin position="169"/>
        <end position="170"/>
    </location>
    <ligand>
        <name>S-adenosyl-L-methionine</name>
        <dbReference type="ChEBI" id="CHEBI:59789"/>
    </ligand>
</feature>
<feature type="binding site" evidence="1">
    <location>
        <position position="196"/>
    </location>
    <ligand>
        <name>S-adenosyl-L-methionine</name>
        <dbReference type="ChEBI" id="CHEBI:59789"/>
    </ligand>
</feature>
<proteinExistence type="inferred from homology"/>
<gene>
    <name type="primary">ppm2</name>
    <name type="synonym">tyw4</name>
    <name type="ORF">AFUA_5G11670</name>
</gene>
<comment type="function">
    <text evidence="1">Probable S-adenosyl-L-methionine-dependent methyltransferase that acts as a component of the wybutosine biosynthesis pathway. Wybutosine is a hyper modified guanosine with a tricyclic base found at the 3'-position adjacent to the anticodon of eukaryotic phenylalanine tRNA. May methylate the carboxyl group of leucine residues to form alpha-leucine ester residues (By similarity).</text>
</comment>
<comment type="catalytic activity">
    <reaction>
        <text>7-[(3S)-3-amino-3-carboxypropyl]wyosine(37) in tRNA(Phe) + S-adenosyl-L-methionine = 7-[(3S)-(3-amino-3-methoxycarbonyl)propyl]wyosine(37) in tRNA(Phe) + S-adenosyl-L-homocysteine</text>
        <dbReference type="Rhea" id="RHEA:36903"/>
        <dbReference type="Rhea" id="RHEA-COMP:10379"/>
        <dbReference type="Rhea" id="RHEA-COMP:11844"/>
        <dbReference type="ChEBI" id="CHEBI:57856"/>
        <dbReference type="ChEBI" id="CHEBI:59789"/>
        <dbReference type="ChEBI" id="CHEBI:73543"/>
        <dbReference type="ChEBI" id="CHEBI:74275"/>
        <dbReference type="EC" id="2.1.1.290"/>
    </reaction>
</comment>
<comment type="catalytic activity">
    <reaction>
        <text>7-[(3S)-(3-amino-3-methoxycarbonyl)propyl]wyosine(37) in tRNA(Phe) + S-adenosyl-L-methionine + CO2 = wybutosine(37) in tRNA(Phe) + S-adenosyl-L-homocysteine + 2 H(+)</text>
        <dbReference type="Rhea" id="RHEA:37119"/>
        <dbReference type="Rhea" id="RHEA-COMP:11844"/>
        <dbReference type="Rhea" id="RHEA-COMP:11847"/>
        <dbReference type="ChEBI" id="CHEBI:15378"/>
        <dbReference type="ChEBI" id="CHEBI:16526"/>
        <dbReference type="ChEBI" id="CHEBI:57856"/>
        <dbReference type="ChEBI" id="CHEBI:59789"/>
        <dbReference type="ChEBI" id="CHEBI:73544"/>
        <dbReference type="ChEBI" id="CHEBI:74275"/>
        <dbReference type="EC" id="2.3.1.231"/>
    </reaction>
</comment>
<comment type="pathway">
    <text>tRNA modification; wybutosine-tRNA(Phe) biosynthesis.</text>
</comment>
<comment type="similarity">
    <text evidence="3">Belongs to the methyltransferase superfamily. LCMT family.</text>
</comment>
<comment type="sequence caution" evidence="3">
    <conflict type="erroneous gene model prediction">
        <sequence resource="EMBL-CDS" id="EAL91445"/>
    </conflict>
</comment>
<accession>Q4WVD1</accession>
<reference key="1">
    <citation type="journal article" date="2005" name="Nature">
        <title>Genomic sequence of the pathogenic and allergenic filamentous fungus Aspergillus fumigatus.</title>
        <authorList>
            <person name="Nierman W.C."/>
            <person name="Pain A."/>
            <person name="Anderson M.J."/>
            <person name="Wortman J.R."/>
            <person name="Kim H.S."/>
            <person name="Arroyo J."/>
            <person name="Berriman M."/>
            <person name="Abe K."/>
            <person name="Archer D.B."/>
            <person name="Bermejo C."/>
            <person name="Bennett J.W."/>
            <person name="Bowyer P."/>
            <person name="Chen D."/>
            <person name="Collins M."/>
            <person name="Coulsen R."/>
            <person name="Davies R."/>
            <person name="Dyer P.S."/>
            <person name="Farman M.L."/>
            <person name="Fedorova N."/>
            <person name="Fedorova N.D."/>
            <person name="Feldblyum T.V."/>
            <person name="Fischer R."/>
            <person name="Fosker N."/>
            <person name="Fraser A."/>
            <person name="Garcia J.L."/>
            <person name="Garcia M.J."/>
            <person name="Goble A."/>
            <person name="Goldman G.H."/>
            <person name="Gomi K."/>
            <person name="Griffith-Jones S."/>
            <person name="Gwilliam R."/>
            <person name="Haas B.J."/>
            <person name="Haas H."/>
            <person name="Harris D.E."/>
            <person name="Horiuchi H."/>
            <person name="Huang J."/>
            <person name="Humphray S."/>
            <person name="Jimenez J."/>
            <person name="Keller N."/>
            <person name="Khouri H."/>
            <person name="Kitamoto K."/>
            <person name="Kobayashi T."/>
            <person name="Konzack S."/>
            <person name="Kulkarni R."/>
            <person name="Kumagai T."/>
            <person name="Lafton A."/>
            <person name="Latge J.-P."/>
            <person name="Li W."/>
            <person name="Lord A."/>
            <person name="Lu C."/>
            <person name="Majoros W.H."/>
            <person name="May G.S."/>
            <person name="Miller B.L."/>
            <person name="Mohamoud Y."/>
            <person name="Molina M."/>
            <person name="Monod M."/>
            <person name="Mouyna I."/>
            <person name="Mulligan S."/>
            <person name="Murphy L.D."/>
            <person name="O'Neil S."/>
            <person name="Paulsen I."/>
            <person name="Penalva M.A."/>
            <person name="Pertea M."/>
            <person name="Price C."/>
            <person name="Pritchard B.L."/>
            <person name="Quail M.A."/>
            <person name="Rabbinowitsch E."/>
            <person name="Rawlins N."/>
            <person name="Rajandream M.A."/>
            <person name="Reichard U."/>
            <person name="Renauld H."/>
            <person name="Robson G.D."/>
            <person name="Rodriguez de Cordoba S."/>
            <person name="Rodriguez-Pena J.M."/>
            <person name="Ronning C.M."/>
            <person name="Rutter S."/>
            <person name="Salzberg S.L."/>
            <person name="Sanchez M."/>
            <person name="Sanchez-Ferrero J.C."/>
            <person name="Saunders D."/>
            <person name="Seeger K."/>
            <person name="Squares R."/>
            <person name="Squares S."/>
            <person name="Takeuchi M."/>
            <person name="Tekaia F."/>
            <person name="Turner G."/>
            <person name="Vazquez de Aldana C.R."/>
            <person name="Weidman J."/>
            <person name="White O."/>
            <person name="Woodward J.R."/>
            <person name="Yu J.-H."/>
            <person name="Fraser C.M."/>
            <person name="Galagan J.E."/>
            <person name="Asai K."/>
            <person name="Machida M."/>
            <person name="Hall N."/>
            <person name="Barrell B.G."/>
            <person name="Denning D.W."/>
        </authorList>
    </citation>
    <scope>NUCLEOTIDE SEQUENCE [LARGE SCALE GENOMIC DNA]</scope>
    <source>
        <strain>ATCC MYA-4609 / CBS 101355 / FGSC A1100 / Af293</strain>
    </source>
</reference>
<sequence length="1047" mass="116731">MGAAKKPAAAGVSTKAEREADLVMETNNSSIVSKRSVELLYYPKPHFFRYFVKRPPRRSPLINRGYWLRMHAMAESVRQFMKQPSDKPKFVLNLGCGFDPLPFILLSTDKSLCSTTRFVDIDYEKLMVNKKTAIRRTDEITRLLENVEFLSDESPIQIRSEQYLAIGCDLKNLKKLDDVLKTELLPSDCSILFLAEVSLTYMDVKSANAVLAWASKLNNDSQFCILEQFFPDGPNHPFASTMMKHFNKLGAPLYSIHEYRSLSEQEQRFRNAGWAHAQARSLWDLWSDNEFVGSSLRAWLDTVEPFDEWEEFALFASHYFLLVASTKPQTMVQELQKTPALTTEPDISSQYVLLAGNNPRGGQRRFGALIPDSENSMGHHSGLGRQTRDVSTDLYSTCKGMTTPQLPFPPREVSARMCHTVTSLRGGDCLLVGGRASPANAFQDCWLRQGKQWQSTKSLPAPRFRHSAVKITLETDSESVLVYGGKSSDGSIFDTWLLWQTHSNGWQEVEIQGARPPARFGACLESINQTTGVLFGGIGSDGIIIEDFWIWKIRHRSDGTVFLELTDHTEHLQQTPLSQYIYRFGSTVTRTSRGLVIVGGIIPRQIVPYECEIMLLDVGELLEYVENESSWGHRILSAIGLGGILQGARPLLVGHVACAIDPDQVLILGGGAVCFSFGTFWTEGGWVLKPAGSTAQNNWTLVPEAMHTPEPVASPKTPQISTALKLSSIRRIRVDTSEQFQQILADGKPVIIEGSDIGPCTELWTKEYLTDVVGSDRKVVVHESQSENMNFQAKNFSYVTKAFGDFLDEVHAGGRQYLRSISAELPSKLPANLAADFPGLKDDFKLPQALSLVTENAHSSPLRISGPVTMWLHYDVSSNTKQEGWKLRVADRYAQVMANVLCQIRGERRLVLFPPADVQYLQVPPGASSSTIDIFQNIKDGSIVSIPHTSPQEAVLNSGDILFIPPMWLHTASPTGGVSVAVNVFFRSLPKGYAAGRDVYGNRDLQAYEKARIDIQKMVRSFDGLPSDISRFYLLRLAQELKDNAGV</sequence>
<name>TYW4_ASPFU</name>